<sequence length="526" mass="54182">MAVPDWKHAADVVVIGTGVAGLAAALAAHRAGRNVVVLTKADQRRGETATHYAQGGIAVVLPGSDDSVDAHASDTLAAGAGMCNLDTVYSIVAEGYHAVTELVGYGARFDESIPGRWAVTCEGGHSRRRIVHAGGDATGAEVQRALDHAADVLDIRTSHLALRVLHDGTVVNGVSVLNPNGWGIVSAPSVILASGGLGHLYGATTNPEGSTGDGIALALWAGVAVSDLEFIQFHPTMLFAAGTGTGGRRPLVTEAIRGEGAILLDSKGNSVTSGVHPLGDLAPRDVVAAAIDARLKATGDSCVYLDARGIDGFASRFPTVTAACRTVGIDPAREPIPVVPGAHYSCGGIVTDAYGQTELAGLFAAGEVARTGMHGANRLASNSLLEGLVVGGRAGRAAAAHAAAAGRAYVSKLEPVTHHALKRRELQRVMSRDAAVMRNAAGLQRLSDTLAEAPIRHVTGRRDFEDVALTLTARAVAAAALARNESRGCHHCTEYPDTAPEHARSTVIRLADDQNLVRAEALATVG</sequence>
<keyword id="KW-0963">Cytoplasm</keyword>
<keyword id="KW-0274">FAD</keyword>
<keyword id="KW-0285">Flavoprotein</keyword>
<keyword id="KW-0547">Nucleotide-binding</keyword>
<keyword id="KW-0560">Oxidoreductase</keyword>
<keyword id="KW-0662">Pyridine nucleotide biosynthesis</keyword>
<keyword id="KW-1185">Reference proteome</keyword>
<organism>
    <name type="scientific">Mycobacterium leprae (strain TN)</name>
    <dbReference type="NCBI Taxonomy" id="272631"/>
    <lineage>
        <taxon>Bacteria</taxon>
        <taxon>Bacillati</taxon>
        <taxon>Actinomycetota</taxon>
        <taxon>Actinomycetes</taxon>
        <taxon>Mycobacteriales</taxon>
        <taxon>Mycobacteriaceae</taxon>
        <taxon>Mycobacterium</taxon>
    </lineage>
</organism>
<dbReference type="EC" id="1.4.3.16" evidence="1"/>
<dbReference type="EMBL" id="U00010">
    <property type="protein sequence ID" value="AAA17059.1"/>
    <property type="status" value="ALT_FRAME"/>
    <property type="molecule type" value="Genomic_DNA"/>
</dbReference>
<dbReference type="EMBL" id="AL583921">
    <property type="protein sequence ID" value="CAC31607.1"/>
    <property type="status" value="ALT_INIT"/>
    <property type="molecule type" value="Genomic_DNA"/>
</dbReference>
<dbReference type="PIR" id="D87062">
    <property type="entry name" value="D87062"/>
</dbReference>
<dbReference type="PIR" id="S72695">
    <property type="entry name" value="S72695"/>
</dbReference>
<dbReference type="SMR" id="Q49617"/>
<dbReference type="STRING" id="272631.gene:17575057"/>
<dbReference type="KEGG" id="mle:ML1226"/>
<dbReference type="Leproma" id="ML1226"/>
<dbReference type="eggNOG" id="COG0029">
    <property type="taxonomic scope" value="Bacteria"/>
</dbReference>
<dbReference type="HOGENOM" id="CLU_014312_3_2_11"/>
<dbReference type="UniPathway" id="UPA00253">
    <property type="reaction ID" value="UER00326"/>
</dbReference>
<dbReference type="Proteomes" id="UP000000806">
    <property type="component" value="Chromosome"/>
</dbReference>
<dbReference type="GO" id="GO:0005737">
    <property type="term" value="C:cytoplasm"/>
    <property type="evidence" value="ECO:0007669"/>
    <property type="project" value="UniProtKB-SubCell"/>
</dbReference>
<dbReference type="GO" id="GO:0008734">
    <property type="term" value="F:L-aspartate oxidase activity"/>
    <property type="evidence" value="ECO:0007669"/>
    <property type="project" value="UniProtKB-EC"/>
</dbReference>
<dbReference type="GO" id="GO:0000166">
    <property type="term" value="F:nucleotide binding"/>
    <property type="evidence" value="ECO:0007669"/>
    <property type="project" value="UniProtKB-KW"/>
</dbReference>
<dbReference type="GO" id="GO:0033765">
    <property type="term" value="F:steroid dehydrogenase activity, acting on the CH-CH group of donors"/>
    <property type="evidence" value="ECO:0007669"/>
    <property type="project" value="UniProtKB-ARBA"/>
</dbReference>
<dbReference type="GO" id="GO:0034628">
    <property type="term" value="P:'de novo' NAD biosynthetic process from L-aspartate"/>
    <property type="evidence" value="ECO:0007669"/>
    <property type="project" value="TreeGrafter"/>
</dbReference>
<dbReference type="FunFam" id="3.90.700.10:FF:000002">
    <property type="entry name" value="L-aspartate oxidase"/>
    <property type="match status" value="1"/>
</dbReference>
<dbReference type="Gene3D" id="3.50.50.60">
    <property type="entry name" value="FAD/NAD(P)-binding domain"/>
    <property type="match status" value="1"/>
</dbReference>
<dbReference type="Gene3D" id="1.20.58.100">
    <property type="entry name" value="Fumarate reductase/succinate dehydrogenase flavoprotein-like, C-terminal domain"/>
    <property type="match status" value="1"/>
</dbReference>
<dbReference type="Gene3D" id="3.90.700.10">
    <property type="entry name" value="Succinate dehydrogenase/fumarate reductase flavoprotein, catalytic domain"/>
    <property type="match status" value="1"/>
</dbReference>
<dbReference type="InterPro" id="IPR003953">
    <property type="entry name" value="FAD-dep_OxRdtase_2_FAD-bd"/>
</dbReference>
<dbReference type="InterPro" id="IPR036188">
    <property type="entry name" value="FAD/NAD-bd_sf"/>
</dbReference>
<dbReference type="InterPro" id="IPR037099">
    <property type="entry name" value="Fum_R/Succ_DH_flav-like_C_sf"/>
</dbReference>
<dbReference type="InterPro" id="IPR015939">
    <property type="entry name" value="Fum_Rdtase/Succ_DH_flav-like_C"/>
</dbReference>
<dbReference type="InterPro" id="IPR005288">
    <property type="entry name" value="NadB"/>
</dbReference>
<dbReference type="InterPro" id="IPR027477">
    <property type="entry name" value="Succ_DH/fumarate_Rdtase_cat_sf"/>
</dbReference>
<dbReference type="NCBIfam" id="TIGR00551">
    <property type="entry name" value="nadB"/>
    <property type="match status" value="1"/>
</dbReference>
<dbReference type="NCBIfam" id="NF005867">
    <property type="entry name" value="PRK07804.1"/>
    <property type="match status" value="1"/>
</dbReference>
<dbReference type="PANTHER" id="PTHR42716">
    <property type="entry name" value="L-ASPARTATE OXIDASE"/>
    <property type="match status" value="1"/>
</dbReference>
<dbReference type="PANTHER" id="PTHR42716:SF2">
    <property type="entry name" value="L-ASPARTATE OXIDASE, CHLOROPLASTIC"/>
    <property type="match status" value="1"/>
</dbReference>
<dbReference type="Pfam" id="PF00890">
    <property type="entry name" value="FAD_binding_2"/>
    <property type="match status" value="1"/>
</dbReference>
<dbReference type="Pfam" id="PF02910">
    <property type="entry name" value="Succ_DH_flav_C"/>
    <property type="match status" value="1"/>
</dbReference>
<dbReference type="PRINTS" id="PR00368">
    <property type="entry name" value="FADPNR"/>
</dbReference>
<dbReference type="PRINTS" id="PR00411">
    <property type="entry name" value="PNDRDTASEI"/>
</dbReference>
<dbReference type="SUPFAM" id="SSF51905">
    <property type="entry name" value="FAD/NAD(P)-binding domain"/>
    <property type="match status" value="1"/>
</dbReference>
<dbReference type="SUPFAM" id="SSF46977">
    <property type="entry name" value="Succinate dehydrogenase/fumarate reductase flavoprotein C-terminal domain"/>
    <property type="match status" value="1"/>
</dbReference>
<dbReference type="SUPFAM" id="SSF56425">
    <property type="entry name" value="Succinate dehydrogenase/fumarate reductase flavoprotein, catalytic domain"/>
    <property type="match status" value="1"/>
</dbReference>
<feature type="chain" id="PRO_0000184388" description="L-aspartate oxidase">
    <location>
        <begin position="1"/>
        <end position="526"/>
    </location>
</feature>
<feature type="active site" description="Proton donor/acceptor" evidence="1">
    <location>
        <position position="284"/>
    </location>
</feature>
<feature type="binding site" evidence="1">
    <location>
        <begin position="17"/>
        <end position="20"/>
    </location>
    <ligand>
        <name>FAD</name>
        <dbReference type="ChEBI" id="CHEBI:57692"/>
    </ligand>
</feature>
<feature type="binding site" evidence="1">
    <location>
        <position position="40"/>
    </location>
    <ligand>
        <name>FAD</name>
        <dbReference type="ChEBI" id="CHEBI:57692"/>
    </ligand>
</feature>
<feature type="binding site" evidence="1">
    <location>
        <begin position="49"/>
        <end position="56"/>
    </location>
    <ligand>
        <name>FAD</name>
        <dbReference type="ChEBI" id="CHEBI:57692"/>
    </ligand>
</feature>
<feature type="binding site" evidence="1">
    <location>
        <position position="213"/>
    </location>
    <ligand>
        <name>FAD</name>
        <dbReference type="ChEBI" id="CHEBI:57692"/>
    </ligand>
</feature>
<feature type="binding site" evidence="1">
    <location>
        <position position="367"/>
    </location>
    <ligand>
        <name>FAD</name>
        <dbReference type="ChEBI" id="CHEBI:57692"/>
    </ligand>
</feature>
<feature type="binding site" evidence="1">
    <location>
        <begin position="383"/>
        <end position="384"/>
    </location>
    <ligand>
        <name>FAD</name>
        <dbReference type="ChEBI" id="CHEBI:57692"/>
    </ligand>
</feature>
<feature type="site" description="Important in orienting the L-aspartate substrate" evidence="1">
    <location>
        <position position="122"/>
    </location>
</feature>
<reference key="1">
    <citation type="submission" date="1994-03" db="EMBL/GenBank/DDBJ databases">
        <authorList>
            <person name="Smith D.R."/>
            <person name="Robison K."/>
        </authorList>
    </citation>
    <scope>NUCLEOTIDE SEQUENCE [GENOMIC DNA]</scope>
</reference>
<reference key="2">
    <citation type="journal article" date="2001" name="Nature">
        <title>Massive gene decay in the leprosy bacillus.</title>
        <authorList>
            <person name="Cole S.T."/>
            <person name="Eiglmeier K."/>
            <person name="Parkhill J."/>
            <person name="James K.D."/>
            <person name="Thomson N.R."/>
            <person name="Wheeler P.R."/>
            <person name="Honore N."/>
            <person name="Garnier T."/>
            <person name="Churcher C.M."/>
            <person name="Harris D.E."/>
            <person name="Mungall K.L."/>
            <person name="Basham D."/>
            <person name="Brown D."/>
            <person name="Chillingworth T."/>
            <person name="Connor R."/>
            <person name="Davies R.M."/>
            <person name="Devlin K."/>
            <person name="Duthoy S."/>
            <person name="Feltwell T."/>
            <person name="Fraser A."/>
            <person name="Hamlin N."/>
            <person name="Holroyd S."/>
            <person name="Hornsby T."/>
            <person name="Jagels K."/>
            <person name="Lacroix C."/>
            <person name="Maclean J."/>
            <person name="Moule S."/>
            <person name="Murphy L.D."/>
            <person name="Oliver K."/>
            <person name="Quail M.A."/>
            <person name="Rajandream M.A."/>
            <person name="Rutherford K.M."/>
            <person name="Rutter S."/>
            <person name="Seeger K."/>
            <person name="Simon S."/>
            <person name="Simmonds M."/>
            <person name="Skelton J."/>
            <person name="Squares R."/>
            <person name="Squares S."/>
            <person name="Stevens K."/>
            <person name="Taylor K."/>
            <person name="Whitehead S."/>
            <person name="Woodward J.R."/>
            <person name="Barrell B.G."/>
        </authorList>
    </citation>
    <scope>NUCLEOTIDE SEQUENCE [LARGE SCALE GENOMIC DNA]</scope>
    <source>
        <strain>TN</strain>
    </source>
</reference>
<accession>Q49617</accession>
<accession>Q9CC64</accession>
<gene>
    <name type="primary">nadB</name>
    <name type="ordered locus">ML1226</name>
    <name type="ORF">B1170_C1_167</name>
</gene>
<name>NADB_MYCLE</name>
<evidence type="ECO:0000250" key="1">
    <source>
        <dbReference type="UniProtKB" id="P10902"/>
    </source>
</evidence>
<evidence type="ECO:0000305" key="2"/>
<comment type="function">
    <text evidence="1">Catalyzes the oxidation of L-aspartate to iminoaspartate, the first step in the de novo biosynthesis of NAD(+).</text>
</comment>
<comment type="catalytic activity">
    <reaction evidence="1">
        <text>L-aspartate + O2 = iminosuccinate + H2O2</text>
        <dbReference type="Rhea" id="RHEA:25876"/>
        <dbReference type="ChEBI" id="CHEBI:15379"/>
        <dbReference type="ChEBI" id="CHEBI:16240"/>
        <dbReference type="ChEBI" id="CHEBI:29991"/>
        <dbReference type="ChEBI" id="CHEBI:77875"/>
        <dbReference type="EC" id="1.4.3.16"/>
    </reaction>
    <physiologicalReaction direction="left-to-right" evidence="1">
        <dbReference type="Rhea" id="RHEA:25877"/>
    </physiologicalReaction>
</comment>
<comment type="cofactor">
    <cofactor evidence="1">
        <name>FAD</name>
        <dbReference type="ChEBI" id="CHEBI:57692"/>
    </cofactor>
    <text evidence="1">Binds 1 FAD per subunit.</text>
</comment>
<comment type="pathway">
    <text evidence="1">Cofactor biosynthesis; NAD(+) biosynthesis; iminoaspartate from L-aspartate (oxidase route): step 1/1.</text>
</comment>
<comment type="subcellular location">
    <subcellularLocation>
        <location evidence="1">Cytoplasm</location>
    </subcellularLocation>
</comment>
<comment type="similarity">
    <text evidence="2">Belongs to the FAD-dependent oxidoreductase 2 family. NadB subfamily.</text>
</comment>
<comment type="sequence caution" evidence="2">
    <conflict type="frameshift">
        <sequence resource="EMBL-CDS" id="AAA17059"/>
    </conflict>
</comment>
<comment type="sequence caution" evidence="2">
    <conflict type="erroneous initiation">
        <sequence resource="EMBL-CDS" id="CAC31607"/>
    </conflict>
</comment>
<protein>
    <recommendedName>
        <fullName evidence="1">L-aspartate oxidase</fullName>
        <shortName evidence="1">LASPO</shortName>
        <ecNumber evidence="1">1.4.3.16</ecNumber>
    </recommendedName>
    <alternativeName>
        <fullName>Quinolinate synthase B</fullName>
    </alternativeName>
</protein>
<proteinExistence type="inferred from homology"/>